<protein>
    <recommendedName>
        <fullName>Low molecular weight neuronal intermediate filament</fullName>
    </recommendedName>
    <alternativeName>
        <fullName>XNIF</fullName>
    </alternativeName>
</protein>
<organism>
    <name type="scientific">Xenopus laevis</name>
    <name type="common">African clawed frog</name>
    <dbReference type="NCBI Taxonomy" id="8355"/>
    <lineage>
        <taxon>Eukaryota</taxon>
        <taxon>Metazoa</taxon>
        <taxon>Chordata</taxon>
        <taxon>Craniata</taxon>
        <taxon>Vertebrata</taxon>
        <taxon>Euteleostomi</taxon>
        <taxon>Amphibia</taxon>
        <taxon>Batrachia</taxon>
        <taxon>Anura</taxon>
        <taxon>Pipoidea</taxon>
        <taxon>Pipidae</taxon>
        <taxon>Xenopodinae</taxon>
        <taxon>Xenopus</taxon>
        <taxon>Xenopus</taxon>
    </lineage>
</organism>
<feature type="chain" id="PRO_0000063860" description="Low molecular weight neuronal intermediate filament">
    <location>
        <begin position="1"/>
        <end position="470"/>
    </location>
</feature>
<feature type="domain" description="IF rod" evidence="1">
    <location>
        <begin position="88"/>
        <end position="399"/>
    </location>
</feature>
<feature type="region of interest" description="Head">
    <location>
        <begin position="1"/>
        <end position="91"/>
    </location>
</feature>
<feature type="region of interest" description="Coil 1A">
    <location>
        <begin position="91"/>
        <end position="123"/>
    </location>
</feature>
<feature type="region of interest" description="Linker 1">
    <location>
        <begin position="121"/>
        <end position="136"/>
    </location>
</feature>
<feature type="region of interest" description="Coil 1B">
    <location>
        <begin position="137"/>
        <end position="232"/>
    </location>
</feature>
<feature type="region of interest" description="Linker 12">
    <location>
        <begin position="233"/>
        <end position="251"/>
    </location>
</feature>
<feature type="region of interest" description="Coil 2A">
    <location>
        <begin position="252"/>
        <end position="270"/>
    </location>
</feature>
<feature type="region of interest" description="Linker 2">
    <location>
        <begin position="271"/>
        <end position="279"/>
    </location>
</feature>
<feature type="region of interest" description="Coil 2B">
    <location>
        <begin position="280"/>
        <end position="395"/>
    </location>
</feature>
<feature type="region of interest" description="Tail">
    <location>
        <begin position="396"/>
        <end position="470"/>
    </location>
</feature>
<feature type="region of interest" description="Disordered" evidence="2">
    <location>
        <begin position="414"/>
        <end position="470"/>
    </location>
</feature>
<feature type="compositionally biased region" description="Low complexity" evidence="2">
    <location>
        <begin position="414"/>
        <end position="431"/>
    </location>
</feature>
<feature type="compositionally biased region" description="Basic and acidic residues" evidence="2">
    <location>
        <begin position="432"/>
        <end position="442"/>
    </location>
</feature>
<comment type="tissue specificity">
    <text>Nervous system; in axons in the PNS and in small perikarya in the dorsal root ganglion.</text>
</comment>
<comment type="developmental stage">
    <text>Expressed in axons of early differentiating neurons as well as in the adult nervous system.</text>
</comment>
<comment type="domain">
    <text>This protein contains a central IF rod domain characteristic of IF proteins but displays divergent head and tail domains.</text>
</comment>
<comment type="similarity">
    <text evidence="1">Belongs to the intermediate filament family.</text>
</comment>
<name>XNIF_XENLA</name>
<dbReference type="EMBL" id="M86653">
    <property type="protein sequence ID" value="AAA83019.1"/>
    <property type="molecule type" value="mRNA"/>
</dbReference>
<dbReference type="PIR" id="A44841">
    <property type="entry name" value="A44841"/>
</dbReference>
<dbReference type="SMR" id="P35617"/>
<dbReference type="AGR" id="Xenbase:XB-GENE-876576"/>
<dbReference type="Xenbase" id="XB-GENE-876576">
    <property type="gene designation" value="nef1f.L"/>
</dbReference>
<dbReference type="Proteomes" id="UP000186698">
    <property type="component" value="Unplaced"/>
</dbReference>
<dbReference type="GO" id="GO:0005737">
    <property type="term" value="C:cytoplasm"/>
    <property type="evidence" value="ECO:0007669"/>
    <property type="project" value="TreeGrafter"/>
</dbReference>
<dbReference type="GO" id="GO:0005882">
    <property type="term" value="C:intermediate filament"/>
    <property type="evidence" value="ECO:0000314"/>
    <property type="project" value="CACAO"/>
</dbReference>
<dbReference type="GO" id="GO:0005200">
    <property type="term" value="F:structural constituent of cytoskeleton"/>
    <property type="evidence" value="ECO:0000318"/>
    <property type="project" value="GO_Central"/>
</dbReference>
<dbReference type="GO" id="GO:0045109">
    <property type="term" value="P:intermediate filament organization"/>
    <property type="evidence" value="ECO:0000318"/>
    <property type="project" value="GO_Central"/>
</dbReference>
<dbReference type="FunFam" id="1.20.5.1160:FF:000001">
    <property type="entry name" value="Keratin type II"/>
    <property type="match status" value="1"/>
</dbReference>
<dbReference type="FunFam" id="1.20.5.170:FF:000002">
    <property type="entry name" value="Type I keratin KA11"/>
    <property type="match status" value="1"/>
</dbReference>
<dbReference type="FunFam" id="1.20.5.500:FF:000001">
    <property type="entry name" value="Type II keratin 23"/>
    <property type="match status" value="1"/>
</dbReference>
<dbReference type="Gene3D" id="1.20.5.170">
    <property type="match status" value="1"/>
</dbReference>
<dbReference type="Gene3D" id="1.20.5.500">
    <property type="entry name" value="Single helix bin"/>
    <property type="match status" value="1"/>
</dbReference>
<dbReference type="Gene3D" id="1.20.5.1160">
    <property type="entry name" value="Vasodilator-stimulated phosphoprotein"/>
    <property type="match status" value="1"/>
</dbReference>
<dbReference type="InterPro" id="IPR018039">
    <property type="entry name" value="IF_conserved"/>
</dbReference>
<dbReference type="InterPro" id="IPR039008">
    <property type="entry name" value="IF_rod_dom"/>
</dbReference>
<dbReference type="InterPro" id="IPR006821">
    <property type="entry name" value="Intermed_filament_DNA-bd"/>
</dbReference>
<dbReference type="InterPro" id="IPR050405">
    <property type="entry name" value="Intermediate_filament"/>
</dbReference>
<dbReference type="InterPro" id="IPR002957">
    <property type="entry name" value="Keratin_I"/>
</dbReference>
<dbReference type="PANTHER" id="PTHR45652">
    <property type="entry name" value="GLIAL FIBRILLARY ACIDIC PROTEIN"/>
    <property type="match status" value="1"/>
</dbReference>
<dbReference type="PANTHER" id="PTHR45652:SF13">
    <property type="entry name" value="NEUROFILAMENT LIGHT POLYPEPTIDE"/>
    <property type="match status" value="1"/>
</dbReference>
<dbReference type="Pfam" id="PF00038">
    <property type="entry name" value="Filament"/>
    <property type="match status" value="1"/>
</dbReference>
<dbReference type="Pfam" id="PF04732">
    <property type="entry name" value="Filament_head"/>
    <property type="match status" value="1"/>
</dbReference>
<dbReference type="PRINTS" id="PR01248">
    <property type="entry name" value="TYPE1KERATIN"/>
</dbReference>
<dbReference type="SMART" id="SM01391">
    <property type="entry name" value="Filament"/>
    <property type="match status" value="1"/>
</dbReference>
<dbReference type="SUPFAM" id="SSF64593">
    <property type="entry name" value="Intermediate filament protein, coiled coil region"/>
    <property type="match status" value="2"/>
</dbReference>
<dbReference type="PROSITE" id="PS00226">
    <property type="entry name" value="IF_ROD_1"/>
    <property type="match status" value="1"/>
</dbReference>
<dbReference type="PROSITE" id="PS51842">
    <property type="entry name" value="IF_ROD_2"/>
    <property type="match status" value="1"/>
</dbReference>
<proteinExistence type="evidence at protein level"/>
<keyword id="KW-0175">Coiled coil</keyword>
<keyword id="KW-0903">Direct protein sequencing</keyword>
<keyword id="KW-0403">Intermediate filament</keyword>
<keyword id="KW-1185">Reference proteome</keyword>
<evidence type="ECO:0000255" key="1">
    <source>
        <dbReference type="PROSITE-ProRule" id="PRU01188"/>
    </source>
</evidence>
<evidence type="ECO:0000256" key="2">
    <source>
        <dbReference type="SAM" id="MobiDB-lite"/>
    </source>
</evidence>
<sequence length="470" mass="53672">MTSRELYTSSYKKIFGDWGRSSSLLYTTNSSSSTRSQSYRPREAYTSNISSYRKVSRSPGHLSSAQDHFDLSQSTALSNELKIVRTNEKEQLQGLNDRFVTYIEKVHHLEQQNKLLESEVTLLRQKHSEPSRLSHIYEQEIRELRSKLEEQEQDKDQAQLDYEHLGACLEQLKLKLEQESARREEAEDVMKNYRKDLDQATLNRLQLEKKVESLLDEIAFLRKVHEEEIAELQASVQEAQISVEMDVVSKPDLTAALKEIRMQYEVLSARNQQSSEEWYQAKIANVSLEASRNNDSVRQAKEEITEYRRQLQARTLEIDALRSANESLERQLQEAEDRSNEEMSHLQDTIGQLDNALRTTKEEMARHLREYQDLLNVKMALDIEIAAYRKLLEGEETRLTSVGGGSMFGIGYPFSSGSYSGGRSSTTSTISIRKEEKKESPEGGKGGSSGQPKTSKPGDQEKISQKAAAN</sequence>
<accession>P35617</accession>
<reference key="1">
    <citation type="journal article" date="1992" name="J. Neurosci.">
        <title>Identification and developmental expression of a novel low molecular weight neuronal intermediate filament protein expressed in Xenopus laevis.</title>
        <authorList>
            <person name="Charnas L.R."/>
            <person name="Szaro B.G."/>
            <person name="Gainer H."/>
        </authorList>
    </citation>
    <scope>NUCLEOTIDE SEQUENCE [MRNA]</scope>
    <scope>PROTEIN SEQUENCE OF 453-463</scope>
    <source>
        <tissue>Brain</tissue>
    </source>
</reference>